<organism>
    <name type="scientific">Aquifex aeolicus (strain VF5)</name>
    <dbReference type="NCBI Taxonomy" id="224324"/>
    <lineage>
        <taxon>Bacteria</taxon>
        <taxon>Pseudomonadati</taxon>
        <taxon>Aquificota</taxon>
        <taxon>Aquificia</taxon>
        <taxon>Aquificales</taxon>
        <taxon>Aquificaceae</taxon>
        <taxon>Aquifex</taxon>
    </lineage>
</organism>
<accession>O67870</accession>
<feature type="chain" id="PRO_0000192230" description="Ribosomal protein L11 methyltransferase">
    <location>
        <begin position="1"/>
        <end position="245"/>
    </location>
</feature>
<feature type="binding site" evidence="1">
    <location>
        <position position="101"/>
    </location>
    <ligand>
        <name>S-adenosyl-L-methionine</name>
        <dbReference type="ChEBI" id="CHEBI:59789"/>
    </ligand>
</feature>
<feature type="binding site" evidence="1">
    <location>
        <position position="122"/>
    </location>
    <ligand>
        <name>S-adenosyl-L-methionine</name>
        <dbReference type="ChEBI" id="CHEBI:59789"/>
    </ligand>
</feature>
<feature type="binding site" evidence="1">
    <location>
        <position position="144"/>
    </location>
    <ligand>
        <name>S-adenosyl-L-methionine</name>
        <dbReference type="ChEBI" id="CHEBI:59789"/>
    </ligand>
</feature>
<feature type="binding site" evidence="1">
    <location>
        <position position="184"/>
    </location>
    <ligand>
        <name>S-adenosyl-L-methionine</name>
        <dbReference type="ChEBI" id="CHEBI:59789"/>
    </ligand>
</feature>
<dbReference type="EC" id="2.1.1.-" evidence="1"/>
<dbReference type="EMBL" id="AE000657">
    <property type="protein sequence ID" value="AAC07828.1"/>
    <property type="molecule type" value="Genomic_DNA"/>
</dbReference>
<dbReference type="PIR" id="B70480">
    <property type="entry name" value="B70480"/>
</dbReference>
<dbReference type="RefSeq" id="NP_214439.1">
    <property type="nucleotide sequence ID" value="NC_000918.1"/>
</dbReference>
<dbReference type="SMR" id="O67870"/>
<dbReference type="FunCoup" id="O67870">
    <property type="interactions" value="375"/>
</dbReference>
<dbReference type="STRING" id="224324.aq_2102"/>
<dbReference type="EnsemblBacteria" id="AAC07828">
    <property type="protein sequence ID" value="AAC07828"/>
    <property type="gene ID" value="aq_2102"/>
</dbReference>
<dbReference type="KEGG" id="aae:aq_2102"/>
<dbReference type="PATRIC" id="fig|224324.8.peg.1621"/>
<dbReference type="eggNOG" id="COG2264">
    <property type="taxonomic scope" value="Bacteria"/>
</dbReference>
<dbReference type="HOGENOM" id="CLU_049382_0_2_0"/>
<dbReference type="InParanoid" id="O67870"/>
<dbReference type="OrthoDB" id="9785995at2"/>
<dbReference type="Proteomes" id="UP000000798">
    <property type="component" value="Chromosome"/>
</dbReference>
<dbReference type="GO" id="GO:0005737">
    <property type="term" value="C:cytoplasm"/>
    <property type="evidence" value="ECO:0007669"/>
    <property type="project" value="UniProtKB-SubCell"/>
</dbReference>
<dbReference type="GO" id="GO:0008276">
    <property type="term" value="F:protein methyltransferase activity"/>
    <property type="evidence" value="ECO:0000318"/>
    <property type="project" value="GO_Central"/>
</dbReference>
<dbReference type="GO" id="GO:0016279">
    <property type="term" value="F:protein-lysine N-methyltransferase activity"/>
    <property type="evidence" value="ECO:0007669"/>
    <property type="project" value="RHEA"/>
</dbReference>
<dbReference type="GO" id="GO:0032259">
    <property type="term" value="P:methylation"/>
    <property type="evidence" value="ECO:0007669"/>
    <property type="project" value="UniProtKB-KW"/>
</dbReference>
<dbReference type="CDD" id="cd02440">
    <property type="entry name" value="AdoMet_MTases"/>
    <property type="match status" value="1"/>
</dbReference>
<dbReference type="Gene3D" id="3.40.50.150">
    <property type="entry name" value="Vaccinia Virus protein VP39"/>
    <property type="match status" value="1"/>
</dbReference>
<dbReference type="HAMAP" id="MF_00735">
    <property type="entry name" value="Methyltr_PrmA"/>
    <property type="match status" value="1"/>
</dbReference>
<dbReference type="InterPro" id="IPR050078">
    <property type="entry name" value="Ribosomal_L11_MeTrfase_PrmA"/>
</dbReference>
<dbReference type="InterPro" id="IPR004498">
    <property type="entry name" value="Ribosomal_PrmA_MeTrfase"/>
</dbReference>
<dbReference type="InterPro" id="IPR029063">
    <property type="entry name" value="SAM-dependent_MTases_sf"/>
</dbReference>
<dbReference type="PANTHER" id="PTHR43648">
    <property type="entry name" value="ELECTRON TRANSFER FLAVOPROTEIN BETA SUBUNIT LYSINE METHYLTRANSFERASE"/>
    <property type="match status" value="1"/>
</dbReference>
<dbReference type="PANTHER" id="PTHR43648:SF1">
    <property type="entry name" value="ELECTRON TRANSFER FLAVOPROTEIN BETA SUBUNIT LYSINE METHYLTRANSFERASE"/>
    <property type="match status" value="1"/>
</dbReference>
<dbReference type="Pfam" id="PF06325">
    <property type="entry name" value="PrmA"/>
    <property type="match status" value="1"/>
</dbReference>
<dbReference type="SUPFAM" id="SSF53335">
    <property type="entry name" value="S-adenosyl-L-methionine-dependent methyltransferases"/>
    <property type="match status" value="1"/>
</dbReference>
<name>PRMA_AQUAE</name>
<proteinExistence type="inferred from homology"/>
<keyword id="KW-0963">Cytoplasm</keyword>
<keyword id="KW-0489">Methyltransferase</keyword>
<keyword id="KW-1185">Reference proteome</keyword>
<keyword id="KW-0949">S-adenosyl-L-methionine</keyword>
<keyword id="KW-0808">Transferase</keyword>
<sequence>MMKIKRFVYSLPEEEFYELVYSQNLSVEVLERKEIEVIFASYKEIEGLTPEKVEEVKEDWENWKEKFKPIEVEDFVIIPSWKKPVIVKPGLAFGTGLHPTTQLCIKALKKYLKEGMTVLDVGTGSGILAIVSALLGAKRVVGIDIDEKAVNECRENAELNKVKVECFRAEPKDVNESFDLVVANLEIHIFERVLKDILPKFKKIGIFSGLYKEKDLKRFEELLGGLKVKEVFEKENWYAVVVEKG</sequence>
<reference key="1">
    <citation type="journal article" date="1998" name="Nature">
        <title>The complete genome of the hyperthermophilic bacterium Aquifex aeolicus.</title>
        <authorList>
            <person name="Deckert G."/>
            <person name="Warren P.V."/>
            <person name="Gaasterland T."/>
            <person name="Young W.G."/>
            <person name="Lenox A.L."/>
            <person name="Graham D.E."/>
            <person name="Overbeek R."/>
            <person name="Snead M.A."/>
            <person name="Keller M."/>
            <person name="Aujay M."/>
            <person name="Huber R."/>
            <person name="Feldman R.A."/>
            <person name="Short J.M."/>
            <person name="Olsen G.J."/>
            <person name="Swanson R.V."/>
        </authorList>
    </citation>
    <scope>NUCLEOTIDE SEQUENCE [LARGE SCALE GENOMIC DNA]</scope>
    <source>
        <strain>VF5</strain>
    </source>
</reference>
<evidence type="ECO:0000255" key="1">
    <source>
        <dbReference type="HAMAP-Rule" id="MF_00735"/>
    </source>
</evidence>
<protein>
    <recommendedName>
        <fullName evidence="1">Ribosomal protein L11 methyltransferase</fullName>
        <shortName evidence="1">L11 Mtase</shortName>
        <ecNumber evidence="1">2.1.1.-</ecNumber>
    </recommendedName>
</protein>
<comment type="function">
    <text evidence="1">Methylates ribosomal protein L11.</text>
</comment>
<comment type="catalytic activity">
    <reaction evidence="1">
        <text>L-lysyl-[protein] + 3 S-adenosyl-L-methionine = N(6),N(6),N(6)-trimethyl-L-lysyl-[protein] + 3 S-adenosyl-L-homocysteine + 3 H(+)</text>
        <dbReference type="Rhea" id="RHEA:54192"/>
        <dbReference type="Rhea" id="RHEA-COMP:9752"/>
        <dbReference type="Rhea" id="RHEA-COMP:13826"/>
        <dbReference type="ChEBI" id="CHEBI:15378"/>
        <dbReference type="ChEBI" id="CHEBI:29969"/>
        <dbReference type="ChEBI" id="CHEBI:57856"/>
        <dbReference type="ChEBI" id="CHEBI:59789"/>
        <dbReference type="ChEBI" id="CHEBI:61961"/>
    </reaction>
</comment>
<comment type="subcellular location">
    <subcellularLocation>
        <location evidence="1">Cytoplasm</location>
    </subcellularLocation>
</comment>
<comment type="similarity">
    <text evidence="1">Belongs to the methyltransferase superfamily. PrmA family.</text>
</comment>
<gene>
    <name evidence="1" type="primary">prmA</name>
    <name type="ordered locus">aq_2102</name>
</gene>